<feature type="chain" id="PRO_0000284534" description="Sorting nexin-30">
    <location>
        <begin position="1"/>
        <end position="437"/>
    </location>
</feature>
<feature type="domain" description="PX" evidence="6">
    <location>
        <begin position="89"/>
        <end position="210"/>
    </location>
</feature>
<feature type="domain" description="BAR" evidence="7">
    <location>
        <begin position="234"/>
        <end position="437"/>
    </location>
</feature>
<feature type="region of interest" description="Disordered" evidence="8">
    <location>
        <begin position="1"/>
        <end position="45"/>
    </location>
</feature>
<feature type="binding site" evidence="2">
    <location>
        <position position="132"/>
    </location>
    <ligand>
        <name>a 1,2-diacyl-sn-glycero-3-phospho-(1D-myo-inositol-3-phosphate)</name>
        <dbReference type="ChEBI" id="CHEBI:58088"/>
    </ligand>
</feature>
<feature type="binding site" evidence="2">
    <location>
        <position position="134"/>
    </location>
    <ligand>
        <name>a 1,2-diacyl-sn-glycero-3-phospho-(1D-myo-inositol-3-phosphate)</name>
        <dbReference type="ChEBI" id="CHEBI:58088"/>
    </ligand>
</feature>
<feature type="binding site" evidence="5">
    <location>
        <position position="162"/>
    </location>
    <ligand>
        <name>a 1,2-diacyl-sn-glycero-3-phospho-(1D-myo-inositol-3-phosphate)</name>
        <dbReference type="ChEBI" id="CHEBI:58088"/>
    </ligand>
</feature>
<feature type="binding site" evidence="4">
    <location>
        <position position="176"/>
    </location>
    <ligand>
        <name>a 1,2-diacyl-sn-glycero-3-phospho-(1D-myo-inositol-3-phosphate)</name>
        <dbReference type="ChEBI" id="CHEBI:58088"/>
    </ligand>
</feature>
<feature type="modified residue" description="Phosphothreonine" evidence="11">
    <location>
        <position position="38"/>
    </location>
</feature>
<feature type="modified residue" description="Phosphoserine" evidence="11">
    <location>
        <position position="40"/>
    </location>
</feature>
<feature type="sequence conflict" description="In Ref. 1; BAE27911." evidence="9" ref="1">
    <original>D</original>
    <variation>G</variation>
    <location>
        <position position="19"/>
    </location>
</feature>
<proteinExistence type="evidence at protein level"/>
<gene>
    <name evidence="10" type="primary">Snx30</name>
</gene>
<name>SNX30_MOUSE</name>
<keyword id="KW-0967">Endosome</keyword>
<keyword id="KW-0472">Membrane</keyword>
<keyword id="KW-0597">Phosphoprotein</keyword>
<keyword id="KW-0653">Protein transport</keyword>
<keyword id="KW-1185">Reference proteome</keyword>
<keyword id="KW-0813">Transport</keyword>
<protein>
    <recommendedName>
        <fullName evidence="9">Sorting nexin-30</fullName>
    </recommendedName>
</protein>
<organism>
    <name type="scientific">Mus musculus</name>
    <name type="common">Mouse</name>
    <dbReference type="NCBI Taxonomy" id="10090"/>
    <lineage>
        <taxon>Eukaryota</taxon>
        <taxon>Metazoa</taxon>
        <taxon>Chordata</taxon>
        <taxon>Craniata</taxon>
        <taxon>Vertebrata</taxon>
        <taxon>Euteleostomi</taxon>
        <taxon>Mammalia</taxon>
        <taxon>Eutheria</taxon>
        <taxon>Euarchontoglires</taxon>
        <taxon>Glires</taxon>
        <taxon>Rodentia</taxon>
        <taxon>Myomorpha</taxon>
        <taxon>Muroidea</taxon>
        <taxon>Muridae</taxon>
        <taxon>Murinae</taxon>
        <taxon>Mus</taxon>
        <taxon>Mus</taxon>
    </lineage>
</organism>
<evidence type="ECO:0000250" key="1">
    <source>
        <dbReference type="UniProtKB" id="O95219"/>
    </source>
</evidence>
<evidence type="ECO:0000250" key="2">
    <source>
        <dbReference type="UniProtKB" id="Q3UR97"/>
    </source>
</evidence>
<evidence type="ECO:0000250" key="3">
    <source>
        <dbReference type="UniProtKB" id="Q5VWJ9"/>
    </source>
</evidence>
<evidence type="ECO:0000250" key="4">
    <source>
        <dbReference type="UniProtKB" id="Q6P4T1"/>
    </source>
</evidence>
<evidence type="ECO:0000250" key="5">
    <source>
        <dbReference type="UniProtKB" id="Q96L94"/>
    </source>
</evidence>
<evidence type="ECO:0000255" key="6">
    <source>
        <dbReference type="PROSITE-ProRule" id="PRU00147"/>
    </source>
</evidence>
<evidence type="ECO:0000255" key="7">
    <source>
        <dbReference type="PROSITE-ProRule" id="PRU00361"/>
    </source>
</evidence>
<evidence type="ECO:0000256" key="8">
    <source>
        <dbReference type="SAM" id="MobiDB-lite"/>
    </source>
</evidence>
<evidence type="ECO:0000305" key="9"/>
<evidence type="ECO:0000312" key="10">
    <source>
        <dbReference type="MGI" id="MGI:2443882"/>
    </source>
</evidence>
<evidence type="ECO:0007744" key="11">
    <source>
    </source>
</evidence>
<sequence>MAGGPPKALPSTGPQSLRDMPHPLAGSSSEEAVGGDSTPSPDLLMARSFGDKDLILPNGGTPAGTASPASSSSLLNRLQLDDDIDGEARDLFVTVDDPKKHVCTMETYITYRITTKSTRVEFDLPEYSVRRRYQDFDWLRNKLEESQPTHLIPPLPEKFVVKGVVDRFSEEFVETRRKALDKFLKRITDHPVLSFNEHFNVFLTAKDLNAYKKQGIALLSRVGESVKHVTGGYKLRSRPLEFAAISDYLDTFALKLGTIDRIAQRIIKEEIEYLVELREYGPVYSTWSALEGELAEPLEGVSACIGNCSTALEELTDDITEEFLPVLREYVLYSDSMKGVLKKRDQVQAEYEAKLEAVALRKEERPKVPADVEKCQDRMECFNADLKADMERWQSNKRHDFRQLLVGLADKNIQYYEKCLMAWESIIPLLQEKQETK</sequence>
<comment type="function">
    <text evidence="3">Involved in the regulation of endocytosis and in several stages of intracellular trafficking. Together with SNX4, involved in autophagosome assembly.</text>
</comment>
<comment type="subunit">
    <text evidence="3">Heterodimer; heterodimerizes with SNX4.</text>
</comment>
<comment type="subcellular location">
    <subcellularLocation>
        <location evidence="3">Early endosome membrane</location>
        <topology evidence="1">Peripheral membrane protein</topology>
        <orientation evidence="1">Cytoplasmic side</orientation>
    </subcellularLocation>
</comment>
<comment type="similarity">
    <text evidence="9">Belongs to the sorting nexin family.</text>
</comment>
<reference key="1">
    <citation type="journal article" date="2005" name="Science">
        <title>The transcriptional landscape of the mammalian genome.</title>
        <authorList>
            <person name="Carninci P."/>
            <person name="Kasukawa T."/>
            <person name="Katayama S."/>
            <person name="Gough J."/>
            <person name="Frith M.C."/>
            <person name="Maeda N."/>
            <person name="Oyama R."/>
            <person name="Ravasi T."/>
            <person name="Lenhard B."/>
            <person name="Wells C."/>
            <person name="Kodzius R."/>
            <person name="Shimokawa K."/>
            <person name="Bajic V.B."/>
            <person name="Brenner S.E."/>
            <person name="Batalov S."/>
            <person name="Forrest A.R."/>
            <person name="Zavolan M."/>
            <person name="Davis M.J."/>
            <person name="Wilming L.G."/>
            <person name="Aidinis V."/>
            <person name="Allen J.E."/>
            <person name="Ambesi-Impiombato A."/>
            <person name="Apweiler R."/>
            <person name="Aturaliya R.N."/>
            <person name="Bailey T.L."/>
            <person name="Bansal M."/>
            <person name="Baxter L."/>
            <person name="Beisel K.W."/>
            <person name="Bersano T."/>
            <person name="Bono H."/>
            <person name="Chalk A.M."/>
            <person name="Chiu K.P."/>
            <person name="Choudhary V."/>
            <person name="Christoffels A."/>
            <person name="Clutterbuck D.R."/>
            <person name="Crowe M.L."/>
            <person name="Dalla E."/>
            <person name="Dalrymple B.P."/>
            <person name="de Bono B."/>
            <person name="Della Gatta G."/>
            <person name="di Bernardo D."/>
            <person name="Down T."/>
            <person name="Engstrom P."/>
            <person name="Fagiolini M."/>
            <person name="Faulkner G."/>
            <person name="Fletcher C.F."/>
            <person name="Fukushima T."/>
            <person name="Furuno M."/>
            <person name="Futaki S."/>
            <person name="Gariboldi M."/>
            <person name="Georgii-Hemming P."/>
            <person name="Gingeras T.R."/>
            <person name="Gojobori T."/>
            <person name="Green R.E."/>
            <person name="Gustincich S."/>
            <person name="Harbers M."/>
            <person name="Hayashi Y."/>
            <person name="Hensch T.K."/>
            <person name="Hirokawa N."/>
            <person name="Hill D."/>
            <person name="Huminiecki L."/>
            <person name="Iacono M."/>
            <person name="Ikeo K."/>
            <person name="Iwama A."/>
            <person name="Ishikawa T."/>
            <person name="Jakt M."/>
            <person name="Kanapin A."/>
            <person name="Katoh M."/>
            <person name="Kawasawa Y."/>
            <person name="Kelso J."/>
            <person name="Kitamura H."/>
            <person name="Kitano H."/>
            <person name="Kollias G."/>
            <person name="Krishnan S.P."/>
            <person name="Kruger A."/>
            <person name="Kummerfeld S.K."/>
            <person name="Kurochkin I.V."/>
            <person name="Lareau L.F."/>
            <person name="Lazarevic D."/>
            <person name="Lipovich L."/>
            <person name="Liu J."/>
            <person name="Liuni S."/>
            <person name="McWilliam S."/>
            <person name="Madan Babu M."/>
            <person name="Madera M."/>
            <person name="Marchionni L."/>
            <person name="Matsuda H."/>
            <person name="Matsuzawa S."/>
            <person name="Miki H."/>
            <person name="Mignone F."/>
            <person name="Miyake S."/>
            <person name="Morris K."/>
            <person name="Mottagui-Tabar S."/>
            <person name="Mulder N."/>
            <person name="Nakano N."/>
            <person name="Nakauchi H."/>
            <person name="Ng P."/>
            <person name="Nilsson R."/>
            <person name="Nishiguchi S."/>
            <person name="Nishikawa S."/>
            <person name="Nori F."/>
            <person name="Ohara O."/>
            <person name="Okazaki Y."/>
            <person name="Orlando V."/>
            <person name="Pang K.C."/>
            <person name="Pavan W.J."/>
            <person name="Pavesi G."/>
            <person name="Pesole G."/>
            <person name="Petrovsky N."/>
            <person name="Piazza S."/>
            <person name="Reed J."/>
            <person name="Reid J.F."/>
            <person name="Ring B.Z."/>
            <person name="Ringwald M."/>
            <person name="Rost B."/>
            <person name="Ruan Y."/>
            <person name="Salzberg S.L."/>
            <person name="Sandelin A."/>
            <person name="Schneider C."/>
            <person name="Schoenbach C."/>
            <person name="Sekiguchi K."/>
            <person name="Semple C.A."/>
            <person name="Seno S."/>
            <person name="Sessa L."/>
            <person name="Sheng Y."/>
            <person name="Shibata Y."/>
            <person name="Shimada H."/>
            <person name="Shimada K."/>
            <person name="Silva D."/>
            <person name="Sinclair B."/>
            <person name="Sperling S."/>
            <person name="Stupka E."/>
            <person name="Sugiura K."/>
            <person name="Sultana R."/>
            <person name="Takenaka Y."/>
            <person name="Taki K."/>
            <person name="Tammoja K."/>
            <person name="Tan S.L."/>
            <person name="Tang S."/>
            <person name="Taylor M.S."/>
            <person name="Tegner J."/>
            <person name="Teichmann S.A."/>
            <person name="Ueda H.R."/>
            <person name="van Nimwegen E."/>
            <person name="Verardo R."/>
            <person name="Wei C.L."/>
            <person name="Yagi K."/>
            <person name="Yamanishi H."/>
            <person name="Zabarovsky E."/>
            <person name="Zhu S."/>
            <person name="Zimmer A."/>
            <person name="Hide W."/>
            <person name="Bult C."/>
            <person name="Grimmond S.M."/>
            <person name="Teasdale R.D."/>
            <person name="Liu E.T."/>
            <person name="Brusic V."/>
            <person name="Quackenbush J."/>
            <person name="Wahlestedt C."/>
            <person name="Mattick J.S."/>
            <person name="Hume D.A."/>
            <person name="Kai C."/>
            <person name="Sasaki D."/>
            <person name="Tomaru Y."/>
            <person name="Fukuda S."/>
            <person name="Kanamori-Katayama M."/>
            <person name="Suzuki M."/>
            <person name="Aoki J."/>
            <person name="Arakawa T."/>
            <person name="Iida J."/>
            <person name="Imamura K."/>
            <person name="Itoh M."/>
            <person name="Kato T."/>
            <person name="Kawaji H."/>
            <person name="Kawagashira N."/>
            <person name="Kawashima T."/>
            <person name="Kojima M."/>
            <person name="Kondo S."/>
            <person name="Konno H."/>
            <person name="Nakano K."/>
            <person name="Ninomiya N."/>
            <person name="Nishio T."/>
            <person name="Okada M."/>
            <person name="Plessy C."/>
            <person name="Shibata K."/>
            <person name="Shiraki T."/>
            <person name="Suzuki S."/>
            <person name="Tagami M."/>
            <person name="Waki K."/>
            <person name="Watahiki A."/>
            <person name="Okamura-Oho Y."/>
            <person name="Suzuki H."/>
            <person name="Kawai J."/>
            <person name="Hayashizaki Y."/>
        </authorList>
    </citation>
    <scope>NUCLEOTIDE SEQUENCE [LARGE SCALE MRNA]</scope>
    <source>
        <strain>C57BL/6J</strain>
        <strain>NOD</strain>
        <tissue>Brain</tissue>
        <tissue>Dendritic cell</tissue>
        <tissue>Skin</tissue>
        <tissue>Submandibular gland</tissue>
    </source>
</reference>
<reference key="2">
    <citation type="journal article" date="2009" name="PLoS Biol.">
        <title>Lineage-specific biology revealed by a finished genome assembly of the mouse.</title>
        <authorList>
            <person name="Church D.M."/>
            <person name="Goodstadt L."/>
            <person name="Hillier L.W."/>
            <person name="Zody M.C."/>
            <person name="Goldstein S."/>
            <person name="She X."/>
            <person name="Bult C.J."/>
            <person name="Agarwala R."/>
            <person name="Cherry J.L."/>
            <person name="DiCuccio M."/>
            <person name="Hlavina W."/>
            <person name="Kapustin Y."/>
            <person name="Meric P."/>
            <person name="Maglott D."/>
            <person name="Birtle Z."/>
            <person name="Marques A.C."/>
            <person name="Graves T."/>
            <person name="Zhou S."/>
            <person name="Teague B."/>
            <person name="Potamousis K."/>
            <person name="Churas C."/>
            <person name="Place M."/>
            <person name="Herschleb J."/>
            <person name="Runnheim R."/>
            <person name="Forrest D."/>
            <person name="Amos-Landgraf J."/>
            <person name="Schwartz D.C."/>
            <person name="Cheng Z."/>
            <person name="Lindblad-Toh K."/>
            <person name="Eichler E.E."/>
            <person name="Ponting C.P."/>
        </authorList>
    </citation>
    <scope>NUCLEOTIDE SEQUENCE [LARGE SCALE GENOMIC DNA]</scope>
    <source>
        <strain>C57BL/6J</strain>
    </source>
</reference>
<reference key="3">
    <citation type="journal article" date="2004" name="Genome Res.">
        <title>The status, quality, and expansion of the NIH full-length cDNA project: the Mammalian Gene Collection (MGC).</title>
        <authorList>
            <consortium name="The MGC Project Team"/>
        </authorList>
    </citation>
    <scope>NUCLEOTIDE SEQUENCE [LARGE SCALE MRNA]</scope>
    <source>
        <strain>FVB/N</strain>
        <tissue>Mammary tumor</tissue>
    </source>
</reference>
<reference key="4">
    <citation type="journal article" date="2010" name="Cell">
        <title>A tissue-specific atlas of mouse protein phosphorylation and expression.</title>
        <authorList>
            <person name="Huttlin E.L."/>
            <person name="Jedrychowski M.P."/>
            <person name="Elias J.E."/>
            <person name="Goswami T."/>
            <person name="Rad R."/>
            <person name="Beausoleil S.A."/>
            <person name="Villen J."/>
            <person name="Haas W."/>
            <person name="Sowa M.E."/>
            <person name="Gygi S.P."/>
        </authorList>
    </citation>
    <scope>PHOSPHORYLATION [LARGE SCALE ANALYSIS] AT THR-38 AND SER-40</scope>
    <scope>IDENTIFICATION BY MASS SPECTROMETRY [LARGE SCALE ANALYSIS]</scope>
    <source>
        <tissue>Brain</tissue>
    </source>
</reference>
<accession>Q8CE50</accession>
<accession>Q3UHE6</accession>
<dbReference type="EMBL" id="AK029012">
    <property type="protein sequence ID" value="BAC26242.1"/>
    <property type="molecule type" value="mRNA"/>
</dbReference>
<dbReference type="EMBL" id="AK147437">
    <property type="protein sequence ID" value="BAE27911.1"/>
    <property type="molecule type" value="mRNA"/>
</dbReference>
<dbReference type="EMBL" id="AK165619">
    <property type="protein sequence ID" value="BAE38299.1"/>
    <property type="molecule type" value="mRNA"/>
</dbReference>
<dbReference type="EMBL" id="AK170774">
    <property type="protein sequence ID" value="BAE42020.1"/>
    <property type="molecule type" value="mRNA"/>
</dbReference>
<dbReference type="EMBL" id="AK170999">
    <property type="protein sequence ID" value="BAE42170.1"/>
    <property type="molecule type" value="mRNA"/>
</dbReference>
<dbReference type="EMBL" id="AL831738">
    <property type="status" value="NOT_ANNOTATED_CDS"/>
    <property type="molecule type" value="Genomic_DNA"/>
</dbReference>
<dbReference type="EMBL" id="BC099674">
    <property type="protein sequence ID" value="AAH99674.1"/>
    <property type="molecule type" value="mRNA"/>
</dbReference>
<dbReference type="CCDS" id="CCDS18226.1"/>
<dbReference type="RefSeq" id="NP_766056.1">
    <property type="nucleotide sequence ID" value="NM_172468.2"/>
</dbReference>
<dbReference type="SMR" id="Q8CE50"/>
<dbReference type="BioGRID" id="229049">
    <property type="interactions" value="5"/>
</dbReference>
<dbReference type="FunCoup" id="Q8CE50">
    <property type="interactions" value="950"/>
</dbReference>
<dbReference type="STRING" id="10090.ENSMUSP00000030080"/>
<dbReference type="GlyGen" id="Q8CE50">
    <property type="glycosylation" value="2 sites"/>
</dbReference>
<dbReference type="iPTMnet" id="Q8CE50"/>
<dbReference type="PhosphoSitePlus" id="Q8CE50"/>
<dbReference type="PaxDb" id="10090-ENSMUSP00000030080"/>
<dbReference type="PeptideAtlas" id="Q8CE50"/>
<dbReference type="ProteomicsDB" id="257283"/>
<dbReference type="Pumba" id="Q8CE50"/>
<dbReference type="Antibodypedia" id="7509">
    <property type="antibodies" value="97 antibodies from 20 providers"/>
</dbReference>
<dbReference type="DNASU" id="209131"/>
<dbReference type="Ensembl" id="ENSMUST00000030080.7">
    <property type="protein sequence ID" value="ENSMUSP00000030080.7"/>
    <property type="gene ID" value="ENSMUSG00000028385.15"/>
</dbReference>
<dbReference type="GeneID" id="209131"/>
<dbReference type="KEGG" id="mmu:209131"/>
<dbReference type="UCSC" id="uc008tae.1">
    <property type="organism name" value="mouse"/>
</dbReference>
<dbReference type="AGR" id="MGI:2443882"/>
<dbReference type="CTD" id="401548"/>
<dbReference type="MGI" id="MGI:2443882">
    <property type="gene designation" value="Snx30"/>
</dbReference>
<dbReference type="VEuPathDB" id="HostDB:ENSMUSG00000028385"/>
<dbReference type="eggNOG" id="KOG2273">
    <property type="taxonomic scope" value="Eukaryota"/>
</dbReference>
<dbReference type="GeneTree" id="ENSGT00940000158994"/>
<dbReference type="HOGENOM" id="CLU_040655_1_0_1"/>
<dbReference type="InParanoid" id="Q8CE50"/>
<dbReference type="OMA" id="WSLHRFI"/>
<dbReference type="OrthoDB" id="205639at2759"/>
<dbReference type="PhylomeDB" id="Q8CE50"/>
<dbReference type="TreeFam" id="TF328543"/>
<dbReference type="BioGRID-ORCS" id="209131">
    <property type="hits" value="1 hit in 78 CRISPR screens"/>
</dbReference>
<dbReference type="ChiTaRS" id="Snx30">
    <property type="organism name" value="mouse"/>
</dbReference>
<dbReference type="PRO" id="PR:Q8CE50"/>
<dbReference type="Proteomes" id="UP000000589">
    <property type="component" value="Chromosome 4"/>
</dbReference>
<dbReference type="RNAct" id="Q8CE50">
    <property type="molecule type" value="protein"/>
</dbReference>
<dbReference type="Bgee" id="ENSMUSG00000028385">
    <property type="expression patterns" value="Expressed in humerus cartilage element and 212 other cell types or tissues"/>
</dbReference>
<dbReference type="GO" id="GO:0005769">
    <property type="term" value="C:early endosome"/>
    <property type="evidence" value="ECO:0000250"/>
    <property type="project" value="UniProtKB"/>
</dbReference>
<dbReference type="GO" id="GO:0031901">
    <property type="term" value="C:early endosome membrane"/>
    <property type="evidence" value="ECO:0007669"/>
    <property type="project" value="UniProtKB-SubCell"/>
</dbReference>
<dbReference type="GO" id="GO:0035091">
    <property type="term" value="F:phosphatidylinositol binding"/>
    <property type="evidence" value="ECO:0007669"/>
    <property type="project" value="InterPro"/>
</dbReference>
<dbReference type="GO" id="GO:2000786">
    <property type="term" value="P:positive regulation of autophagosome assembly"/>
    <property type="evidence" value="ECO:0000250"/>
    <property type="project" value="UniProtKB"/>
</dbReference>
<dbReference type="GO" id="GO:0015031">
    <property type="term" value="P:protein transport"/>
    <property type="evidence" value="ECO:0000250"/>
    <property type="project" value="UniProtKB"/>
</dbReference>
<dbReference type="CDD" id="cd07667">
    <property type="entry name" value="BAR_SNX30"/>
    <property type="match status" value="1"/>
</dbReference>
<dbReference type="CDD" id="cd06860">
    <property type="entry name" value="PX_SNX7_30_like"/>
    <property type="match status" value="1"/>
</dbReference>
<dbReference type="Gene3D" id="1.20.1270.60">
    <property type="entry name" value="Arfaptin homology (AH) domain/BAR domain"/>
    <property type="match status" value="1"/>
</dbReference>
<dbReference type="Gene3D" id="3.30.1520.10">
    <property type="entry name" value="Phox-like domain"/>
    <property type="match status" value="1"/>
</dbReference>
<dbReference type="InterPro" id="IPR027267">
    <property type="entry name" value="AH/BAR_dom_sf"/>
</dbReference>
<dbReference type="InterPro" id="IPR004148">
    <property type="entry name" value="BAR_dom"/>
</dbReference>
<dbReference type="InterPro" id="IPR001683">
    <property type="entry name" value="PX_dom"/>
</dbReference>
<dbReference type="InterPro" id="IPR036871">
    <property type="entry name" value="PX_dom_sf"/>
</dbReference>
<dbReference type="InterPro" id="IPR028649">
    <property type="entry name" value="SNX30_BAR"/>
</dbReference>
<dbReference type="PANTHER" id="PTHR45949:SF1">
    <property type="entry name" value="SORTING NEXIN-30"/>
    <property type="match status" value="1"/>
</dbReference>
<dbReference type="PANTHER" id="PTHR45949">
    <property type="entry name" value="SORTING NEXIN-4"/>
    <property type="match status" value="1"/>
</dbReference>
<dbReference type="Pfam" id="PF03114">
    <property type="entry name" value="BAR"/>
    <property type="match status" value="1"/>
</dbReference>
<dbReference type="Pfam" id="PF00787">
    <property type="entry name" value="PX"/>
    <property type="match status" value="1"/>
</dbReference>
<dbReference type="SMART" id="SM00312">
    <property type="entry name" value="PX"/>
    <property type="match status" value="1"/>
</dbReference>
<dbReference type="SUPFAM" id="SSF103657">
    <property type="entry name" value="BAR/IMD domain-like"/>
    <property type="match status" value="1"/>
</dbReference>
<dbReference type="SUPFAM" id="SSF64268">
    <property type="entry name" value="PX domain"/>
    <property type="match status" value="1"/>
</dbReference>
<dbReference type="PROSITE" id="PS50195">
    <property type="entry name" value="PX"/>
    <property type="match status" value="1"/>
</dbReference>